<feature type="chain" id="PRO_1000200152" description="UPF0102 protein Mrad2831_2938">
    <location>
        <begin position="1"/>
        <end position="129"/>
    </location>
</feature>
<dbReference type="EMBL" id="CP001001">
    <property type="protein sequence ID" value="ACB24922.1"/>
    <property type="molecule type" value="Genomic_DNA"/>
</dbReference>
<dbReference type="RefSeq" id="WP_012319889.1">
    <property type="nucleotide sequence ID" value="NC_010505.1"/>
</dbReference>
<dbReference type="SMR" id="B1M445"/>
<dbReference type="STRING" id="426355.Mrad2831_2938"/>
<dbReference type="GeneID" id="6138982"/>
<dbReference type="KEGG" id="mrd:Mrad2831_2938"/>
<dbReference type="PATRIC" id="fig|426355.14.peg.3006"/>
<dbReference type="eggNOG" id="COG0792">
    <property type="taxonomic scope" value="Bacteria"/>
</dbReference>
<dbReference type="HOGENOM" id="CLU_115353_0_2_5"/>
<dbReference type="OrthoDB" id="9812968at2"/>
<dbReference type="Proteomes" id="UP000006589">
    <property type="component" value="Chromosome"/>
</dbReference>
<dbReference type="GO" id="GO:0003676">
    <property type="term" value="F:nucleic acid binding"/>
    <property type="evidence" value="ECO:0007669"/>
    <property type="project" value="InterPro"/>
</dbReference>
<dbReference type="Gene3D" id="3.40.1350.10">
    <property type="match status" value="1"/>
</dbReference>
<dbReference type="HAMAP" id="MF_00048">
    <property type="entry name" value="UPF0102"/>
    <property type="match status" value="1"/>
</dbReference>
<dbReference type="InterPro" id="IPR011335">
    <property type="entry name" value="Restrct_endonuc-II-like"/>
</dbReference>
<dbReference type="InterPro" id="IPR011856">
    <property type="entry name" value="tRNA_endonuc-like_dom_sf"/>
</dbReference>
<dbReference type="InterPro" id="IPR003509">
    <property type="entry name" value="UPF0102_YraN-like"/>
</dbReference>
<dbReference type="NCBIfam" id="NF011272">
    <property type="entry name" value="PRK14679.1"/>
    <property type="match status" value="1"/>
</dbReference>
<dbReference type="PANTHER" id="PTHR34039">
    <property type="entry name" value="UPF0102 PROTEIN YRAN"/>
    <property type="match status" value="1"/>
</dbReference>
<dbReference type="PANTHER" id="PTHR34039:SF1">
    <property type="entry name" value="UPF0102 PROTEIN YRAN"/>
    <property type="match status" value="1"/>
</dbReference>
<dbReference type="Pfam" id="PF02021">
    <property type="entry name" value="UPF0102"/>
    <property type="match status" value="1"/>
</dbReference>
<dbReference type="SUPFAM" id="SSF52980">
    <property type="entry name" value="Restriction endonuclease-like"/>
    <property type="match status" value="1"/>
</dbReference>
<sequence length="129" mass="14589">MTGALPDGADRRRAAYRFGHRAEWLALAALMLKGYWPIGRRVSVAGGEIDLVVRRWNTVVFVEVKARAKRDDAREAIDGAKRRRFSRAVRAWIGRNAWCAGATFRADAVFVGHWAWPAHVERVFTIEGL</sequence>
<organism>
    <name type="scientific">Methylobacterium radiotolerans (strain ATCC 27329 / DSM 1819 / JCM 2831 / NBRC 15690 / NCIMB 10815 / 0-1)</name>
    <dbReference type="NCBI Taxonomy" id="426355"/>
    <lineage>
        <taxon>Bacteria</taxon>
        <taxon>Pseudomonadati</taxon>
        <taxon>Pseudomonadota</taxon>
        <taxon>Alphaproteobacteria</taxon>
        <taxon>Hyphomicrobiales</taxon>
        <taxon>Methylobacteriaceae</taxon>
        <taxon>Methylobacterium</taxon>
    </lineage>
</organism>
<comment type="similarity">
    <text evidence="1">Belongs to the UPF0102 family.</text>
</comment>
<reference key="1">
    <citation type="submission" date="2008-03" db="EMBL/GenBank/DDBJ databases">
        <title>Complete sequence of chromosome of Methylobacterium radiotolerans JCM 2831.</title>
        <authorList>
            <consortium name="US DOE Joint Genome Institute"/>
            <person name="Copeland A."/>
            <person name="Lucas S."/>
            <person name="Lapidus A."/>
            <person name="Glavina del Rio T."/>
            <person name="Dalin E."/>
            <person name="Tice H."/>
            <person name="Bruce D."/>
            <person name="Goodwin L."/>
            <person name="Pitluck S."/>
            <person name="Kiss H."/>
            <person name="Brettin T."/>
            <person name="Detter J.C."/>
            <person name="Han C."/>
            <person name="Kuske C.R."/>
            <person name="Schmutz J."/>
            <person name="Larimer F."/>
            <person name="Land M."/>
            <person name="Hauser L."/>
            <person name="Kyrpides N."/>
            <person name="Mikhailova N."/>
            <person name="Marx C.J."/>
            <person name="Richardson P."/>
        </authorList>
    </citation>
    <scope>NUCLEOTIDE SEQUENCE [LARGE SCALE GENOMIC DNA]</scope>
    <source>
        <strain>ATCC 27329 / DSM 1819 / JCM 2831 / NBRC 15690 / NCIMB 10815 / 0-1</strain>
    </source>
</reference>
<protein>
    <recommendedName>
        <fullName evidence="1">UPF0102 protein Mrad2831_2938</fullName>
    </recommendedName>
</protein>
<proteinExistence type="inferred from homology"/>
<accession>B1M445</accession>
<evidence type="ECO:0000255" key="1">
    <source>
        <dbReference type="HAMAP-Rule" id="MF_00048"/>
    </source>
</evidence>
<name>Y2938_METRJ</name>
<gene>
    <name type="ordered locus">Mrad2831_2938</name>
</gene>